<feature type="chain" id="PRO_0000062149" description="Large ribosomal subunit protein uL16">
    <location>
        <begin position="1"/>
        <end position="142"/>
    </location>
</feature>
<gene>
    <name evidence="1" type="primary">rplP</name>
    <name type="ordered locus">MYPU_5800</name>
</gene>
<evidence type="ECO:0000255" key="1">
    <source>
        <dbReference type="HAMAP-Rule" id="MF_01342"/>
    </source>
</evidence>
<evidence type="ECO:0000305" key="2"/>
<dbReference type="EMBL" id="AL445565">
    <property type="protein sequence ID" value="CAC13753.1"/>
    <property type="molecule type" value="Genomic_DNA"/>
</dbReference>
<dbReference type="PIR" id="D90584">
    <property type="entry name" value="D90584"/>
</dbReference>
<dbReference type="RefSeq" id="WP_010925381.1">
    <property type="nucleotide sequence ID" value="NC_002771.1"/>
</dbReference>
<dbReference type="SMR" id="Q98PY9"/>
<dbReference type="STRING" id="272635.gene:17577187"/>
<dbReference type="KEGG" id="mpu:MYPU_5800"/>
<dbReference type="eggNOG" id="COG0197">
    <property type="taxonomic scope" value="Bacteria"/>
</dbReference>
<dbReference type="HOGENOM" id="CLU_078858_2_1_14"/>
<dbReference type="BioCyc" id="MPUL272635:G1GT6-593-MONOMER"/>
<dbReference type="Proteomes" id="UP000000528">
    <property type="component" value="Chromosome"/>
</dbReference>
<dbReference type="GO" id="GO:0022625">
    <property type="term" value="C:cytosolic large ribosomal subunit"/>
    <property type="evidence" value="ECO:0007669"/>
    <property type="project" value="TreeGrafter"/>
</dbReference>
<dbReference type="GO" id="GO:0019843">
    <property type="term" value="F:rRNA binding"/>
    <property type="evidence" value="ECO:0007669"/>
    <property type="project" value="UniProtKB-UniRule"/>
</dbReference>
<dbReference type="GO" id="GO:0003735">
    <property type="term" value="F:structural constituent of ribosome"/>
    <property type="evidence" value="ECO:0007669"/>
    <property type="project" value="InterPro"/>
</dbReference>
<dbReference type="GO" id="GO:0000049">
    <property type="term" value="F:tRNA binding"/>
    <property type="evidence" value="ECO:0007669"/>
    <property type="project" value="UniProtKB-KW"/>
</dbReference>
<dbReference type="GO" id="GO:0006412">
    <property type="term" value="P:translation"/>
    <property type="evidence" value="ECO:0007669"/>
    <property type="project" value="UniProtKB-UniRule"/>
</dbReference>
<dbReference type="CDD" id="cd01433">
    <property type="entry name" value="Ribosomal_L16_L10e"/>
    <property type="match status" value="1"/>
</dbReference>
<dbReference type="FunFam" id="3.90.1170.10:FF:000001">
    <property type="entry name" value="50S ribosomal protein L16"/>
    <property type="match status" value="1"/>
</dbReference>
<dbReference type="Gene3D" id="3.90.1170.10">
    <property type="entry name" value="Ribosomal protein L10e/L16"/>
    <property type="match status" value="1"/>
</dbReference>
<dbReference type="HAMAP" id="MF_01342">
    <property type="entry name" value="Ribosomal_uL16"/>
    <property type="match status" value="1"/>
</dbReference>
<dbReference type="InterPro" id="IPR047873">
    <property type="entry name" value="Ribosomal_uL16"/>
</dbReference>
<dbReference type="InterPro" id="IPR000114">
    <property type="entry name" value="Ribosomal_uL16_bact-type"/>
</dbReference>
<dbReference type="InterPro" id="IPR020798">
    <property type="entry name" value="Ribosomal_uL16_CS"/>
</dbReference>
<dbReference type="InterPro" id="IPR016180">
    <property type="entry name" value="Ribosomal_uL16_dom"/>
</dbReference>
<dbReference type="InterPro" id="IPR036920">
    <property type="entry name" value="Ribosomal_uL16_sf"/>
</dbReference>
<dbReference type="NCBIfam" id="TIGR01164">
    <property type="entry name" value="rplP_bact"/>
    <property type="match status" value="1"/>
</dbReference>
<dbReference type="PANTHER" id="PTHR12220">
    <property type="entry name" value="50S/60S RIBOSOMAL PROTEIN L16"/>
    <property type="match status" value="1"/>
</dbReference>
<dbReference type="PANTHER" id="PTHR12220:SF13">
    <property type="entry name" value="LARGE RIBOSOMAL SUBUNIT PROTEIN UL16M"/>
    <property type="match status" value="1"/>
</dbReference>
<dbReference type="Pfam" id="PF00252">
    <property type="entry name" value="Ribosomal_L16"/>
    <property type="match status" value="1"/>
</dbReference>
<dbReference type="PRINTS" id="PR00060">
    <property type="entry name" value="RIBOSOMALL16"/>
</dbReference>
<dbReference type="SUPFAM" id="SSF54686">
    <property type="entry name" value="Ribosomal protein L16p/L10e"/>
    <property type="match status" value="1"/>
</dbReference>
<dbReference type="PROSITE" id="PS00701">
    <property type="entry name" value="RIBOSOMAL_L16_2"/>
    <property type="match status" value="1"/>
</dbReference>
<accession>Q98PY9</accession>
<protein>
    <recommendedName>
        <fullName evidence="1">Large ribosomal subunit protein uL16</fullName>
    </recommendedName>
    <alternativeName>
        <fullName evidence="2">50S ribosomal protein L16</fullName>
    </alternativeName>
</protein>
<name>RL16_MYCPU</name>
<sequence>MLQPKRTKHRKMFRIRHDKKDAFKGNKVSFGEYGLQATTSAWITARQIESARIAATRRMGREGQVIIRIFPHLSKTSKPIGVRMGSGKGSPEKWYSVVKRQTMMFEVSGIKPEVAKDALRLAGHKLPVKWRIVEASPKEEVI</sequence>
<reference key="1">
    <citation type="journal article" date="2001" name="Nucleic Acids Res.">
        <title>The complete genome sequence of the murine respiratory pathogen Mycoplasma pulmonis.</title>
        <authorList>
            <person name="Chambaud I."/>
            <person name="Heilig R."/>
            <person name="Ferris S."/>
            <person name="Barbe V."/>
            <person name="Samson D."/>
            <person name="Galisson F."/>
            <person name="Moszer I."/>
            <person name="Dybvig K."/>
            <person name="Wroblewski H."/>
            <person name="Viari A."/>
            <person name="Rocha E.P.C."/>
            <person name="Blanchard A."/>
        </authorList>
    </citation>
    <scope>NUCLEOTIDE SEQUENCE [LARGE SCALE GENOMIC DNA]</scope>
    <source>
        <strain>UAB CTIP</strain>
    </source>
</reference>
<proteinExistence type="inferred from homology"/>
<keyword id="KW-1185">Reference proteome</keyword>
<keyword id="KW-0687">Ribonucleoprotein</keyword>
<keyword id="KW-0689">Ribosomal protein</keyword>
<keyword id="KW-0694">RNA-binding</keyword>
<keyword id="KW-0699">rRNA-binding</keyword>
<keyword id="KW-0820">tRNA-binding</keyword>
<comment type="function">
    <text evidence="1">Binds 23S rRNA and is also seen to make contacts with the A and possibly P site tRNAs.</text>
</comment>
<comment type="subunit">
    <text evidence="1">Part of the 50S ribosomal subunit.</text>
</comment>
<comment type="similarity">
    <text evidence="1">Belongs to the universal ribosomal protein uL16 family.</text>
</comment>
<organism>
    <name type="scientific">Mycoplasmopsis pulmonis (strain UAB CTIP)</name>
    <name type="common">Mycoplasma pulmonis</name>
    <dbReference type="NCBI Taxonomy" id="272635"/>
    <lineage>
        <taxon>Bacteria</taxon>
        <taxon>Bacillati</taxon>
        <taxon>Mycoplasmatota</taxon>
        <taxon>Mycoplasmoidales</taxon>
        <taxon>Metamycoplasmataceae</taxon>
        <taxon>Mycoplasmopsis</taxon>
    </lineage>
</organism>